<gene>
    <name evidence="7" type="primary">KIN7A</name>
    <name evidence="5" type="synonym">DBS1</name>
    <name evidence="5" type="synonym">NACK</name>
    <name evidence="9" type="ordered locus">Os01g0513900</name>
    <name evidence="7" type="ordered locus">LOC_Os01g33040</name>
    <name evidence="10" type="ORF">OsJ_01991</name>
    <name evidence="8" type="ORF">P0504D03.36</name>
</gene>
<comment type="function">
    <text evidence="4">May be essential to promote the progression of cytokinesis during node-internode differentiation.</text>
</comment>
<comment type="tissue specificity">
    <text evidence="4">Ubiquitous with a preferential expression in the shoot apical meristem (SAM).</text>
</comment>
<comment type="similarity">
    <text evidence="6">Belongs to the TRAFAC class myosin-kinesin ATPase superfamily. Kinesin family. KIN-7 subfamily.</text>
</comment>
<dbReference type="EMBL" id="AP002970">
    <property type="protein sequence ID" value="BAB32972.1"/>
    <property type="molecule type" value="Genomic_DNA"/>
</dbReference>
<dbReference type="EMBL" id="AP008207">
    <property type="protein sequence ID" value="BAF05100.1"/>
    <property type="molecule type" value="Genomic_DNA"/>
</dbReference>
<dbReference type="EMBL" id="AP014957">
    <property type="protein sequence ID" value="BAS72403.1"/>
    <property type="molecule type" value="Genomic_DNA"/>
</dbReference>
<dbReference type="EMBL" id="CM000138">
    <property type="protein sequence ID" value="EEE54684.1"/>
    <property type="molecule type" value="Genomic_DNA"/>
</dbReference>
<dbReference type="EMBL" id="AK103077">
    <property type="status" value="NOT_ANNOTATED_CDS"/>
    <property type="molecule type" value="mRNA"/>
</dbReference>
<dbReference type="RefSeq" id="XP_015628228.1">
    <property type="nucleotide sequence ID" value="XM_015772742.1"/>
</dbReference>
<dbReference type="SMR" id="Q9AWM8"/>
<dbReference type="FunCoup" id="Q9AWM8">
    <property type="interactions" value="11"/>
</dbReference>
<dbReference type="STRING" id="39947.Q9AWM8"/>
<dbReference type="PaxDb" id="39947-Q9AWM8"/>
<dbReference type="EnsemblPlants" id="Os01t0513900-01">
    <property type="protein sequence ID" value="Os01t0513900-01"/>
    <property type="gene ID" value="Os01g0513900"/>
</dbReference>
<dbReference type="Gramene" id="Os01t0513900-01">
    <property type="protein sequence ID" value="Os01t0513900-01"/>
    <property type="gene ID" value="Os01g0513900"/>
</dbReference>
<dbReference type="KEGG" id="dosa:Os01g0513900"/>
<dbReference type="eggNOG" id="KOG0242">
    <property type="taxonomic scope" value="Eukaryota"/>
</dbReference>
<dbReference type="HOGENOM" id="CLU_013407_0_0_1"/>
<dbReference type="InParanoid" id="Q9AWM8"/>
<dbReference type="OMA" id="STEIIIM"/>
<dbReference type="OrthoDB" id="3176171at2759"/>
<dbReference type="Proteomes" id="UP000000763">
    <property type="component" value="Chromosome 1"/>
</dbReference>
<dbReference type="Proteomes" id="UP000007752">
    <property type="component" value="Chromosome 1"/>
</dbReference>
<dbReference type="Proteomes" id="UP000059680">
    <property type="component" value="Chromosome 1"/>
</dbReference>
<dbReference type="GO" id="GO:0005874">
    <property type="term" value="C:microtubule"/>
    <property type="evidence" value="ECO:0007669"/>
    <property type="project" value="UniProtKB-KW"/>
</dbReference>
<dbReference type="GO" id="GO:0005524">
    <property type="term" value="F:ATP binding"/>
    <property type="evidence" value="ECO:0007669"/>
    <property type="project" value="UniProtKB-KW"/>
</dbReference>
<dbReference type="GO" id="GO:0008017">
    <property type="term" value="F:microtubule binding"/>
    <property type="evidence" value="ECO:0007669"/>
    <property type="project" value="InterPro"/>
</dbReference>
<dbReference type="GO" id="GO:0003777">
    <property type="term" value="F:microtubule motor activity"/>
    <property type="evidence" value="ECO:0007669"/>
    <property type="project" value="InterPro"/>
</dbReference>
<dbReference type="GO" id="GO:0051301">
    <property type="term" value="P:cell division"/>
    <property type="evidence" value="ECO:0007669"/>
    <property type="project" value="UniProtKB-KW"/>
</dbReference>
<dbReference type="GO" id="GO:0007018">
    <property type="term" value="P:microtubule-based movement"/>
    <property type="evidence" value="ECO:0007669"/>
    <property type="project" value="InterPro"/>
</dbReference>
<dbReference type="CDD" id="cd01374">
    <property type="entry name" value="KISc_CENP_E"/>
    <property type="match status" value="1"/>
</dbReference>
<dbReference type="FunFam" id="3.40.850.10:FF:000016">
    <property type="entry name" value="Kinesin-like protein"/>
    <property type="match status" value="1"/>
</dbReference>
<dbReference type="Gene3D" id="3.40.850.10">
    <property type="entry name" value="Kinesin motor domain"/>
    <property type="match status" value="1"/>
</dbReference>
<dbReference type="InterPro" id="IPR027640">
    <property type="entry name" value="Kinesin-like_fam"/>
</dbReference>
<dbReference type="InterPro" id="IPR001752">
    <property type="entry name" value="Kinesin_motor_dom"/>
</dbReference>
<dbReference type="InterPro" id="IPR036961">
    <property type="entry name" value="Kinesin_motor_dom_sf"/>
</dbReference>
<dbReference type="InterPro" id="IPR021881">
    <property type="entry name" value="NACK_C"/>
</dbReference>
<dbReference type="InterPro" id="IPR027417">
    <property type="entry name" value="P-loop_NTPase"/>
</dbReference>
<dbReference type="PANTHER" id="PTHR47968">
    <property type="entry name" value="CENTROMERE PROTEIN E"/>
    <property type="match status" value="1"/>
</dbReference>
<dbReference type="PANTHER" id="PTHR47968:SF23">
    <property type="entry name" value="KINESIN-LIKE PROTEIN KIN-7A"/>
    <property type="match status" value="1"/>
</dbReference>
<dbReference type="Pfam" id="PF11995">
    <property type="entry name" value="DUF3490"/>
    <property type="match status" value="1"/>
</dbReference>
<dbReference type="Pfam" id="PF00225">
    <property type="entry name" value="Kinesin"/>
    <property type="match status" value="1"/>
</dbReference>
<dbReference type="PRINTS" id="PR00380">
    <property type="entry name" value="KINESINHEAVY"/>
</dbReference>
<dbReference type="SMART" id="SM00129">
    <property type="entry name" value="KISc"/>
    <property type="match status" value="1"/>
</dbReference>
<dbReference type="SUPFAM" id="SSF52540">
    <property type="entry name" value="P-loop containing nucleoside triphosphate hydrolases"/>
    <property type="match status" value="1"/>
</dbReference>
<dbReference type="PROSITE" id="PS50067">
    <property type="entry name" value="KINESIN_MOTOR_2"/>
    <property type="match status" value="1"/>
</dbReference>
<protein>
    <recommendedName>
        <fullName evidence="7">Kinesin-like protein KIN-7A</fullName>
    </recommendedName>
    <alternativeName>
        <fullName evidence="7">NPK1-activating kinesin-like protein</fullName>
        <shortName evidence="5">OsNACK</shortName>
    </alternativeName>
    <alternativeName>
        <fullName evidence="5">Protein DWARF BAMBOO SHOOT 1</fullName>
    </alternativeName>
</protein>
<sequence>MGVSRPPSTPASKIERTPMSTPTPGGSTRVKEEKIFVTVRVRPLSKKELALKDQVAWECDDNQTILYKGPPQDRAAPTSYTFDKVFGPASQTEVVYEEGAKDVAMSALTGINATIFAYGQTSSGKTFTMRGVTESAVNDIYRHIENTPERDFIIKISAMEIYNEIVKDLLRPESTNLRLLDDPEKGTIVEKLEEEIAKDSQHLRHLISICEEQRQVGETALNDTSSRSHQIIRLTVESRLREVSGCVKSFVANLNFVDLAGSERAAQTHAVGARLKEGCHINRSLLTLTTVIRKLSSDKRSGHIPYRDSKLTRILQLSLGGNARTAIICTMSPAQTHVEQSRNTLFFATCAKEVTNNAKVNMVVSDKQLVKHLQMEVARLEAELRTPDRASSSEIIIMERDRKIRQMEKEMEELKKQRDNAQLKLEELQKKMGDNQPGWNPFDSPQRTRKCLTYSGSLQPSNKMKIRSSIRQSATAPFMLKHEIRKLEQLQQQLEVEANRAIEVLHKEVECHKHGNQDAAETIAKLQAEIRGMQSVRSDRDVDMITDEGNGSDLKEEISRLHMQDNDIAKLEAKLENVQRSIDRLVMSLPNVGTQCNETTPKSNRAKKKKRMLLPLGVSNINRPNLIRAPCSPLSSSRPLEPEVENRAPEGDTVSHEGSERATPTKSEDTGDVSSRDETPRYRRSSSVNMKKMQKMFQNAAEENVRNIRAYVTELKERVAKLQYQKQLLVCQVLELESNEGKTNDMEEDSEENAGSLQDGPDSWDRLFKEQMQHIIQLWDLCHVSIIHRTQFYLLFRGDRADQIYIEVEVRRLTWLQQHFAEVGDASPAAGDDSTISLASSIKALRNEREFLARRMGSRLTEEERERLFIKWQVPLEAKQRKLQLVNRLWTDPNDQAHIDESADIVARLVGFCEGGNISKEMFELNFAVPASRKPWLMGWQPISNMIREKTQLW</sequence>
<keyword id="KW-0067">ATP-binding</keyword>
<keyword id="KW-0131">Cell cycle</keyword>
<keyword id="KW-0132">Cell division</keyword>
<keyword id="KW-0175">Coiled coil</keyword>
<keyword id="KW-0493">Microtubule</keyword>
<keyword id="KW-0505">Motor protein</keyword>
<keyword id="KW-0547">Nucleotide-binding</keyword>
<keyword id="KW-1185">Reference proteome</keyword>
<name>KN7A_ORYSJ</name>
<evidence type="ECO:0000255" key="1"/>
<evidence type="ECO:0000255" key="2">
    <source>
        <dbReference type="PROSITE-ProRule" id="PRU00283"/>
    </source>
</evidence>
<evidence type="ECO:0000256" key="3">
    <source>
        <dbReference type="SAM" id="MobiDB-lite"/>
    </source>
</evidence>
<evidence type="ECO:0000269" key="4">
    <source>
    </source>
</evidence>
<evidence type="ECO:0000303" key="5">
    <source>
    </source>
</evidence>
<evidence type="ECO:0000303" key="6">
    <source>
    </source>
</evidence>
<evidence type="ECO:0000305" key="7"/>
<evidence type="ECO:0000312" key="8">
    <source>
        <dbReference type="EMBL" id="BAB32972.1"/>
    </source>
</evidence>
<evidence type="ECO:0000312" key="9">
    <source>
        <dbReference type="EMBL" id="BAF05100.1"/>
    </source>
</evidence>
<evidence type="ECO:0000312" key="10">
    <source>
        <dbReference type="EMBL" id="EEE54684.1"/>
    </source>
</evidence>
<feature type="chain" id="PRO_0000436622" description="Kinesin-like protein KIN-7A">
    <location>
        <begin position="1"/>
        <end position="954"/>
    </location>
</feature>
<feature type="domain" description="Kinesin motor" evidence="2">
    <location>
        <begin position="34"/>
        <end position="354"/>
    </location>
</feature>
<feature type="region of interest" description="Disordered" evidence="3">
    <location>
        <begin position="1"/>
        <end position="29"/>
    </location>
</feature>
<feature type="region of interest" description="Disordered" evidence="3">
    <location>
        <begin position="624"/>
        <end position="689"/>
    </location>
</feature>
<feature type="region of interest" description="Disordered" evidence="3">
    <location>
        <begin position="741"/>
        <end position="762"/>
    </location>
</feature>
<feature type="coiled-coil region" evidence="1">
    <location>
        <begin position="363"/>
        <end position="436"/>
    </location>
</feature>
<feature type="coiled-coil region" evidence="1">
    <location>
        <begin position="480"/>
        <end position="588"/>
    </location>
</feature>
<feature type="compositionally biased region" description="Low complexity" evidence="3">
    <location>
        <begin position="17"/>
        <end position="28"/>
    </location>
</feature>
<feature type="compositionally biased region" description="Low complexity" evidence="3">
    <location>
        <begin position="630"/>
        <end position="639"/>
    </location>
</feature>
<feature type="compositionally biased region" description="Basic and acidic residues" evidence="3">
    <location>
        <begin position="640"/>
        <end position="660"/>
    </location>
</feature>
<feature type="compositionally biased region" description="Basic and acidic residues" evidence="3">
    <location>
        <begin position="666"/>
        <end position="681"/>
    </location>
</feature>
<feature type="binding site" evidence="2">
    <location>
        <begin position="119"/>
        <end position="126"/>
    </location>
    <ligand>
        <name>ATP</name>
        <dbReference type="ChEBI" id="CHEBI:30616"/>
    </ligand>
</feature>
<feature type="sequence conflict" description="In Ref. 6; AK103077." evidence="7" ref="6">
    <original>R</original>
    <variation>K</variation>
    <location>
        <position position="560"/>
    </location>
</feature>
<organism>
    <name type="scientific">Oryza sativa subsp. japonica</name>
    <name type="common">Rice</name>
    <dbReference type="NCBI Taxonomy" id="39947"/>
    <lineage>
        <taxon>Eukaryota</taxon>
        <taxon>Viridiplantae</taxon>
        <taxon>Streptophyta</taxon>
        <taxon>Embryophyta</taxon>
        <taxon>Tracheophyta</taxon>
        <taxon>Spermatophyta</taxon>
        <taxon>Magnoliopsida</taxon>
        <taxon>Liliopsida</taxon>
        <taxon>Poales</taxon>
        <taxon>Poaceae</taxon>
        <taxon>BOP clade</taxon>
        <taxon>Oryzoideae</taxon>
        <taxon>Oryzeae</taxon>
        <taxon>Oryzinae</taxon>
        <taxon>Oryza</taxon>
        <taxon>Oryza sativa</taxon>
    </lineage>
</organism>
<proteinExistence type="evidence at transcript level"/>
<accession>Q9AWM8</accession>
<reference key="1">
    <citation type="journal article" date="2002" name="Nature">
        <title>The genome sequence and structure of rice chromosome 1.</title>
        <authorList>
            <person name="Sasaki T."/>
            <person name="Matsumoto T."/>
            <person name="Yamamoto K."/>
            <person name="Sakata K."/>
            <person name="Baba T."/>
            <person name="Katayose Y."/>
            <person name="Wu J."/>
            <person name="Niimura Y."/>
            <person name="Cheng Z."/>
            <person name="Nagamura Y."/>
            <person name="Antonio B.A."/>
            <person name="Kanamori H."/>
            <person name="Hosokawa S."/>
            <person name="Masukawa M."/>
            <person name="Arikawa K."/>
            <person name="Chiden Y."/>
            <person name="Hayashi M."/>
            <person name="Okamoto M."/>
            <person name="Ando T."/>
            <person name="Aoki H."/>
            <person name="Arita K."/>
            <person name="Hamada M."/>
            <person name="Harada C."/>
            <person name="Hijishita S."/>
            <person name="Honda M."/>
            <person name="Ichikawa Y."/>
            <person name="Idonuma A."/>
            <person name="Iijima M."/>
            <person name="Ikeda M."/>
            <person name="Ikeno M."/>
            <person name="Ito S."/>
            <person name="Ito T."/>
            <person name="Ito Y."/>
            <person name="Ito Y."/>
            <person name="Iwabuchi A."/>
            <person name="Kamiya K."/>
            <person name="Karasawa W."/>
            <person name="Katagiri S."/>
            <person name="Kikuta A."/>
            <person name="Kobayashi N."/>
            <person name="Kono I."/>
            <person name="Machita K."/>
            <person name="Maehara T."/>
            <person name="Mizuno H."/>
            <person name="Mizubayashi T."/>
            <person name="Mukai Y."/>
            <person name="Nagasaki H."/>
            <person name="Nakashima M."/>
            <person name="Nakama Y."/>
            <person name="Nakamichi Y."/>
            <person name="Nakamura M."/>
            <person name="Namiki N."/>
            <person name="Negishi M."/>
            <person name="Ohta I."/>
            <person name="Ono N."/>
            <person name="Saji S."/>
            <person name="Sakai K."/>
            <person name="Shibata M."/>
            <person name="Shimokawa T."/>
            <person name="Shomura A."/>
            <person name="Song J."/>
            <person name="Takazaki Y."/>
            <person name="Terasawa K."/>
            <person name="Tsuji K."/>
            <person name="Waki K."/>
            <person name="Yamagata H."/>
            <person name="Yamane H."/>
            <person name="Yoshiki S."/>
            <person name="Yoshihara R."/>
            <person name="Yukawa K."/>
            <person name="Zhong H."/>
            <person name="Iwama H."/>
            <person name="Endo T."/>
            <person name="Ito H."/>
            <person name="Hahn J.H."/>
            <person name="Kim H.-I."/>
            <person name="Eun M.-Y."/>
            <person name="Yano M."/>
            <person name="Jiang J."/>
            <person name="Gojobori T."/>
        </authorList>
    </citation>
    <scope>NUCLEOTIDE SEQUENCE [LARGE SCALE GENOMIC DNA]</scope>
    <source>
        <strain>cv. Nipponbare</strain>
    </source>
</reference>
<reference key="2">
    <citation type="journal article" date="2005" name="Nature">
        <title>The map-based sequence of the rice genome.</title>
        <authorList>
            <consortium name="International rice genome sequencing project (IRGSP)"/>
        </authorList>
    </citation>
    <scope>NUCLEOTIDE SEQUENCE [LARGE SCALE GENOMIC DNA]</scope>
    <source>
        <strain>cv. Nipponbare</strain>
    </source>
</reference>
<reference key="3">
    <citation type="journal article" date="2008" name="Nucleic Acids Res.">
        <title>The rice annotation project database (RAP-DB): 2008 update.</title>
        <authorList>
            <consortium name="The rice annotation project (RAP)"/>
        </authorList>
    </citation>
    <scope>GENOME REANNOTATION</scope>
    <source>
        <strain>cv. Nipponbare</strain>
    </source>
</reference>
<reference key="4">
    <citation type="journal article" date="2013" name="Rice">
        <title>Improvement of the Oryza sativa Nipponbare reference genome using next generation sequence and optical map data.</title>
        <authorList>
            <person name="Kawahara Y."/>
            <person name="de la Bastide M."/>
            <person name="Hamilton J.P."/>
            <person name="Kanamori H."/>
            <person name="McCombie W.R."/>
            <person name="Ouyang S."/>
            <person name="Schwartz D.C."/>
            <person name="Tanaka T."/>
            <person name="Wu J."/>
            <person name="Zhou S."/>
            <person name="Childs K.L."/>
            <person name="Davidson R.M."/>
            <person name="Lin H."/>
            <person name="Quesada-Ocampo L."/>
            <person name="Vaillancourt B."/>
            <person name="Sakai H."/>
            <person name="Lee S.S."/>
            <person name="Kim J."/>
            <person name="Numa H."/>
            <person name="Itoh T."/>
            <person name="Buell C.R."/>
            <person name="Matsumoto T."/>
        </authorList>
    </citation>
    <scope>GENOME REANNOTATION</scope>
    <source>
        <strain>cv. Nipponbare</strain>
    </source>
</reference>
<reference key="5">
    <citation type="journal article" date="2005" name="PLoS Biol.">
        <title>The genomes of Oryza sativa: a history of duplications.</title>
        <authorList>
            <person name="Yu J."/>
            <person name="Wang J."/>
            <person name="Lin W."/>
            <person name="Li S."/>
            <person name="Li H."/>
            <person name="Zhou J."/>
            <person name="Ni P."/>
            <person name="Dong W."/>
            <person name="Hu S."/>
            <person name="Zeng C."/>
            <person name="Zhang J."/>
            <person name="Zhang Y."/>
            <person name="Li R."/>
            <person name="Xu Z."/>
            <person name="Li S."/>
            <person name="Li X."/>
            <person name="Zheng H."/>
            <person name="Cong L."/>
            <person name="Lin L."/>
            <person name="Yin J."/>
            <person name="Geng J."/>
            <person name="Li G."/>
            <person name="Shi J."/>
            <person name="Liu J."/>
            <person name="Lv H."/>
            <person name="Li J."/>
            <person name="Wang J."/>
            <person name="Deng Y."/>
            <person name="Ran L."/>
            <person name="Shi X."/>
            <person name="Wang X."/>
            <person name="Wu Q."/>
            <person name="Li C."/>
            <person name="Ren X."/>
            <person name="Wang J."/>
            <person name="Wang X."/>
            <person name="Li D."/>
            <person name="Liu D."/>
            <person name="Zhang X."/>
            <person name="Ji Z."/>
            <person name="Zhao W."/>
            <person name="Sun Y."/>
            <person name="Zhang Z."/>
            <person name="Bao J."/>
            <person name="Han Y."/>
            <person name="Dong L."/>
            <person name="Ji J."/>
            <person name="Chen P."/>
            <person name="Wu S."/>
            <person name="Liu J."/>
            <person name="Xiao Y."/>
            <person name="Bu D."/>
            <person name="Tan J."/>
            <person name="Yang L."/>
            <person name="Ye C."/>
            <person name="Zhang J."/>
            <person name="Xu J."/>
            <person name="Zhou Y."/>
            <person name="Yu Y."/>
            <person name="Zhang B."/>
            <person name="Zhuang S."/>
            <person name="Wei H."/>
            <person name="Liu B."/>
            <person name="Lei M."/>
            <person name="Yu H."/>
            <person name="Li Y."/>
            <person name="Xu H."/>
            <person name="Wei S."/>
            <person name="He X."/>
            <person name="Fang L."/>
            <person name="Zhang Z."/>
            <person name="Zhang Y."/>
            <person name="Huang X."/>
            <person name="Su Z."/>
            <person name="Tong W."/>
            <person name="Li J."/>
            <person name="Tong Z."/>
            <person name="Li S."/>
            <person name="Ye J."/>
            <person name="Wang L."/>
            <person name="Fang L."/>
            <person name="Lei T."/>
            <person name="Chen C.-S."/>
            <person name="Chen H.-C."/>
            <person name="Xu Z."/>
            <person name="Li H."/>
            <person name="Huang H."/>
            <person name="Zhang F."/>
            <person name="Xu H."/>
            <person name="Li N."/>
            <person name="Zhao C."/>
            <person name="Li S."/>
            <person name="Dong L."/>
            <person name="Huang Y."/>
            <person name="Li L."/>
            <person name="Xi Y."/>
            <person name="Qi Q."/>
            <person name="Li W."/>
            <person name="Zhang B."/>
            <person name="Hu W."/>
            <person name="Zhang Y."/>
            <person name="Tian X."/>
            <person name="Jiao Y."/>
            <person name="Liang X."/>
            <person name="Jin J."/>
            <person name="Gao L."/>
            <person name="Zheng W."/>
            <person name="Hao B."/>
            <person name="Liu S.-M."/>
            <person name="Wang W."/>
            <person name="Yuan L."/>
            <person name="Cao M."/>
            <person name="McDermott J."/>
            <person name="Samudrala R."/>
            <person name="Wang J."/>
            <person name="Wong G.K.-S."/>
            <person name="Yang H."/>
        </authorList>
    </citation>
    <scope>NUCLEOTIDE SEQUENCE [LARGE SCALE GENOMIC DNA]</scope>
    <source>
        <strain>cv. Nipponbare</strain>
    </source>
</reference>
<reference key="6">
    <citation type="journal article" date="2003" name="Science">
        <title>Collection, mapping, and annotation of over 28,000 cDNA clones from japonica rice.</title>
        <authorList>
            <consortium name="The rice full-length cDNA consortium"/>
        </authorList>
    </citation>
    <scope>NUCLEOTIDE SEQUENCE [LARGE SCALE MRNA]</scope>
    <source>
        <strain>cv. Nipponbare</strain>
    </source>
</reference>
<reference key="7">
    <citation type="journal article" date="2005" name="Plant Cell Physiol.">
        <title>The rice mutant dwarf bamboo shoot 1: a leaky mutant of the NACK-type kinesin-like gene can initiate organ primordia but not organ development.</title>
        <authorList>
            <person name="Sazuka T."/>
            <person name="Aichi I."/>
            <person name="Kawai T."/>
            <person name="Matsuo N."/>
            <person name="Kitano H."/>
            <person name="Matsuoka M."/>
        </authorList>
    </citation>
    <scope>TISSUE SPECIFICITY</scope>
    <scope>FUNCTION</scope>
</reference>
<reference key="8">
    <citation type="journal article" date="2009" name="Ann. Bot.">
        <title>Evaluating the microtubule cytoskeleton and its interacting proteins in monocots by mining the rice genome.</title>
        <authorList>
            <person name="Guo L."/>
            <person name="Ho C.M."/>
            <person name="Kong Z."/>
            <person name="Lee Y.R."/>
            <person name="Qian Q."/>
            <person name="Liu B."/>
        </authorList>
    </citation>
    <scope>GENE FAMILY</scope>
    <scope>NOMENCLATURE</scope>
</reference>